<reference key="1">
    <citation type="journal article" date="2001" name="Nature">
        <title>Complete genome sequence of Salmonella enterica serovar Typhimurium LT2.</title>
        <authorList>
            <person name="McClelland M."/>
            <person name="Sanderson K.E."/>
            <person name="Spieth J."/>
            <person name="Clifton S.W."/>
            <person name="Latreille P."/>
            <person name="Courtney L."/>
            <person name="Porwollik S."/>
            <person name="Ali J."/>
            <person name="Dante M."/>
            <person name="Du F."/>
            <person name="Hou S."/>
            <person name="Layman D."/>
            <person name="Leonard S."/>
            <person name="Nguyen C."/>
            <person name="Scott K."/>
            <person name="Holmes A."/>
            <person name="Grewal N."/>
            <person name="Mulvaney E."/>
            <person name="Ryan E."/>
            <person name="Sun H."/>
            <person name="Florea L."/>
            <person name="Miller W."/>
            <person name="Stoneking T."/>
            <person name="Nhan M."/>
            <person name="Waterston R."/>
            <person name="Wilson R.K."/>
        </authorList>
    </citation>
    <scope>NUCLEOTIDE SEQUENCE [LARGE SCALE GENOMIC DNA]</scope>
    <source>
        <strain>LT2 / SGSC1412 / ATCC 700720</strain>
    </source>
</reference>
<organism>
    <name type="scientific">Salmonella typhimurium (strain LT2 / SGSC1412 / ATCC 700720)</name>
    <dbReference type="NCBI Taxonomy" id="99287"/>
    <lineage>
        <taxon>Bacteria</taxon>
        <taxon>Pseudomonadati</taxon>
        <taxon>Pseudomonadota</taxon>
        <taxon>Gammaproteobacteria</taxon>
        <taxon>Enterobacterales</taxon>
        <taxon>Enterobacteriaceae</taxon>
        <taxon>Salmonella</taxon>
    </lineage>
</organism>
<name>PSD_SALTY</name>
<gene>
    <name evidence="1" type="primary">psd</name>
    <name type="ordered locus">STM4348</name>
</gene>
<comment type="function">
    <text evidence="1">Catalyzes the formation of phosphatidylethanolamine (PtdEtn) from phosphatidylserine (PtdSer).</text>
</comment>
<comment type="catalytic activity">
    <reaction evidence="1">
        <text>a 1,2-diacyl-sn-glycero-3-phospho-L-serine + H(+) = a 1,2-diacyl-sn-glycero-3-phosphoethanolamine + CO2</text>
        <dbReference type="Rhea" id="RHEA:20828"/>
        <dbReference type="ChEBI" id="CHEBI:15378"/>
        <dbReference type="ChEBI" id="CHEBI:16526"/>
        <dbReference type="ChEBI" id="CHEBI:57262"/>
        <dbReference type="ChEBI" id="CHEBI:64612"/>
        <dbReference type="EC" id="4.1.1.65"/>
    </reaction>
</comment>
<comment type="cofactor">
    <cofactor evidence="1">
        <name>pyruvate</name>
        <dbReference type="ChEBI" id="CHEBI:15361"/>
    </cofactor>
    <text evidence="1">Binds 1 pyruvoyl group covalently per subunit.</text>
</comment>
<comment type="pathway">
    <text evidence="1">Phospholipid metabolism; phosphatidylethanolamine biosynthesis; phosphatidylethanolamine from CDP-diacylglycerol: step 2/2.</text>
</comment>
<comment type="subunit">
    <text evidence="1">Heterodimer of a large membrane-associated beta subunit and a small pyruvoyl-containing alpha subunit.</text>
</comment>
<comment type="subcellular location">
    <subcellularLocation>
        <location evidence="1">Cell membrane</location>
        <topology evidence="1">Peripheral membrane protein</topology>
    </subcellularLocation>
</comment>
<comment type="PTM">
    <text evidence="1">Is synthesized initially as an inactive proenzyme. Formation of the active enzyme involves a self-maturation process in which the active site pyruvoyl group is generated from an internal serine residue via an autocatalytic post-translational modification. Two non-identical subunits are generated from the proenzyme in this reaction, and the pyruvate is formed at the N-terminus of the alpha chain, which is derived from the carboxyl end of the proenzyme. The autoendoproteolytic cleavage occurs by a canonical serine protease mechanism, in which the side chain hydroxyl group of the serine supplies its oxygen atom to form the C-terminus of the beta chain, while the remainder of the serine residue undergoes an oxidative deamination to produce ammonia and the pyruvoyl prosthetic group on the alpha chain. During this reaction, the Ser that is part of the protease active site of the proenzyme becomes the pyruvoyl prosthetic group, which constitutes an essential element of the active site of the mature decarboxylase.</text>
</comment>
<comment type="similarity">
    <text evidence="1">Belongs to the phosphatidylserine decarboxylase family. PSD-B subfamily. Prokaryotic type I sub-subfamily.</text>
</comment>
<proteinExistence type="inferred from homology"/>
<accession>Q8ZKB1</accession>
<feature type="chain" id="PRO_0000029697" description="Phosphatidylserine decarboxylase beta chain" evidence="1">
    <location>
        <begin position="1"/>
        <end position="253"/>
    </location>
</feature>
<feature type="chain" id="PRO_0000029698" description="Phosphatidylserine decarboxylase alpha chain" evidence="1">
    <location>
        <begin position="254"/>
        <end position="322"/>
    </location>
</feature>
<feature type="region of interest" description="Disordered" evidence="2">
    <location>
        <begin position="296"/>
        <end position="322"/>
    </location>
</feature>
<feature type="compositionally biased region" description="Basic and acidic residues" evidence="2">
    <location>
        <begin position="303"/>
        <end position="322"/>
    </location>
</feature>
<feature type="active site" description="Charge relay system; for autoendoproteolytic cleavage activity" evidence="1">
    <location>
        <position position="90"/>
    </location>
</feature>
<feature type="active site" description="Charge relay system; for autoendoproteolytic cleavage activity" evidence="1">
    <location>
        <position position="147"/>
    </location>
</feature>
<feature type="active site" description="Charge relay system; for autoendoproteolytic cleavage activity" evidence="1">
    <location>
        <position position="254"/>
    </location>
</feature>
<feature type="active site" description="Schiff-base intermediate with substrate; via pyruvic acid; for decarboxylase activity" evidence="1">
    <location>
        <position position="254"/>
    </location>
</feature>
<feature type="site" description="Cleavage (non-hydrolytic); by autocatalysis" evidence="1">
    <location>
        <begin position="253"/>
        <end position="254"/>
    </location>
</feature>
<feature type="modified residue" description="Pyruvic acid (Ser); by autocatalysis" evidence="1">
    <location>
        <position position="254"/>
    </location>
</feature>
<keyword id="KW-1003">Cell membrane</keyword>
<keyword id="KW-0210">Decarboxylase</keyword>
<keyword id="KW-0444">Lipid biosynthesis</keyword>
<keyword id="KW-0443">Lipid metabolism</keyword>
<keyword id="KW-0456">Lyase</keyword>
<keyword id="KW-0472">Membrane</keyword>
<keyword id="KW-0594">Phospholipid biosynthesis</keyword>
<keyword id="KW-1208">Phospholipid metabolism</keyword>
<keyword id="KW-0670">Pyruvate</keyword>
<keyword id="KW-1185">Reference proteome</keyword>
<keyword id="KW-0865">Zymogen</keyword>
<dbReference type="EC" id="4.1.1.65" evidence="1"/>
<dbReference type="EMBL" id="AE006468">
    <property type="protein sequence ID" value="AAL23171.1"/>
    <property type="molecule type" value="Genomic_DNA"/>
</dbReference>
<dbReference type="RefSeq" id="NP_463212.1">
    <property type="nucleotide sequence ID" value="NC_003197.2"/>
</dbReference>
<dbReference type="SMR" id="Q8ZKB1"/>
<dbReference type="STRING" id="99287.STM4348"/>
<dbReference type="PaxDb" id="99287-STM4348"/>
<dbReference type="GeneID" id="1255874"/>
<dbReference type="KEGG" id="stm:STM4348"/>
<dbReference type="PATRIC" id="fig|99287.12.peg.4575"/>
<dbReference type="HOGENOM" id="CLU_029061_4_1_6"/>
<dbReference type="OMA" id="KDYHHYH"/>
<dbReference type="PhylomeDB" id="Q8ZKB1"/>
<dbReference type="BioCyc" id="SENT99287:STM4348-MONOMER"/>
<dbReference type="UniPathway" id="UPA00558">
    <property type="reaction ID" value="UER00616"/>
</dbReference>
<dbReference type="Proteomes" id="UP000001014">
    <property type="component" value="Chromosome"/>
</dbReference>
<dbReference type="GO" id="GO:0005886">
    <property type="term" value="C:plasma membrane"/>
    <property type="evidence" value="ECO:0007669"/>
    <property type="project" value="UniProtKB-SubCell"/>
</dbReference>
<dbReference type="GO" id="GO:0004609">
    <property type="term" value="F:phosphatidylserine decarboxylase activity"/>
    <property type="evidence" value="ECO:0000318"/>
    <property type="project" value="GO_Central"/>
</dbReference>
<dbReference type="GO" id="GO:0006646">
    <property type="term" value="P:phosphatidylethanolamine biosynthetic process"/>
    <property type="evidence" value="ECO:0000318"/>
    <property type="project" value="GO_Central"/>
</dbReference>
<dbReference type="HAMAP" id="MF_00662">
    <property type="entry name" value="PS_decarb_PSD_B_type1"/>
    <property type="match status" value="1"/>
</dbReference>
<dbReference type="InterPro" id="IPR003817">
    <property type="entry name" value="PS_Dcarbxylase"/>
</dbReference>
<dbReference type="InterPro" id="IPR033177">
    <property type="entry name" value="PSD-B"/>
</dbReference>
<dbReference type="InterPro" id="IPR033178">
    <property type="entry name" value="PSD_type1_pro"/>
</dbReference>
<dbReference type="NCBIfam" id="TIGR00163">
    <property type="entry name" value="PS_decarb"/>
    <property type="match status" value="1"/>
</dbReference>
<dbReference type="PANTHER" id="PTHR10067">
    <property type="entry name" value="PHOSPHATIDYLSERINE DECARBOXYLASE"/>
    <property type="match status" value="1"/>
</dbReference>
<dbReference type="PANTHER" id="PTHR10067:SF6">
    <property type="entry name" value="PHOSPHATIDYLSERINE DECARBOXYLASE PROENZYME, MITOCHONDRIAL"/>
    <property type="match status" value="1"/>
</dbReference>
<dbReference type="Pfam" id="PF02666">
    <property type="entry name" value="PS_Dcarbxylase"/>
    <property type="match status" value="1"/>
</dbReference>
<evidence type="ECO:0000255" key="1">
    <source>
        <dbReference type="HAMAP-Rule" id="MF_00662"/>
    </source>
</evidence>
<evidence type="ECO:0000256" key="2">
    <source>
        <dbReference type="SAM" id="MobiDB-lite"/>
    </source>
</evidence>
<protein>
    <recommendedName>
        <fullName evidence="1">Phosphatidylserine decarboxylase proenzyme</fullName>
        <ecNumber evidence="1">4.1.1.65</ecNumber>
    </recommendedName>
    <component>
        <recommendedName>
            <fullName evidence="1">Phosphatidylserine decarboxylase alpha chain</fullName>
        </recommendedName>
    </component>
    <component>
        <recommendedName>
            <fullName evidence="1">Phosphatidylserine decarboxylase beta chain</fullName>
        </recommendedName>
    </component>
</protein>
<sequence length="322" mass="35888">MLNSFKLSLQYILPKLWLTRLAGWGASKRAGWLTKLVIDLFVKYYKVDMTEAQKPDTASYRTFNDFFVRPLRDDVRPLNTDPNILVMPADGVISQLGRIEEDKILQAKGHNYSLEALLAGNYLMADKFRNGTFVTTYLSPRDYHRVHMPCNGILREMIYVPGDLFSVNHLTAQNVPNLFARNERVICLFDTEFGPMAQILVGATIVGSIETVWAGTITPPREGIIKRWTWPEGEHEGSVALLKGQEMGRFKLGSTVINLFAPGKVNLIASLASLSVTKIGQPLATSTETFVAPEVEPAPLPAEEIKAEHDASPLVDNKKDDT</sequence>